<dbReference type="EC" id="2.1.1.45" evidence="1"/>
<dbReference type="EMBL" id="AE009951">
    <property type="protein sequence ID" value="AAL94446.1"/>
    <property type="molecule type" value="Genomic_DNA"/>
</dbReference>
<dbReference type="RefSeq" id="NP_603147.1">
    <property type="nucleotide sequence ID" value="NC_003454.1"/>
</dbReference>
<dbReference type="RefSeq" id="WP_011016252.1">
    <property type="nucleotide sequence ID" value="NZ_CP028101.1"/>
</dbReference>
<dbReference type="SMR" id="Q8RGP6"/>
<dbReference type="FunCoup" id="Q8RGP6">
    <property type="interactions" value="32"/>
</dbReference>
<dbReference type="STRING" id="190304.FN0240"/>
<dbReference type="PaxDb" id="190304-FN0240"/>
<dbReference type="EnsemblBacteria" id="AAL94446">
    <property type="protein sequence ID" value="AAL94446"/>
    <property type="gene ID" value="FN0240"/>
</dbReference>
<dbReference type="GeneID" id="79783256"/>
<dbReference type="KEGG" id="fnu:FN0240"/>
<dbReference type="PATRIC" id="fig|190304.8.peg.821"/>
<dbReference type="eggNOG" id="COG0207">
    <property type="taxonomic scope" value="Bacteria"/>
</dbReference>
<dbReference type="HOGENOM" id="CLU_021669_0_0_0"/>
<dbReference type="InParanoid" id="Q8RGP6"/>
<dbReference type="BioCyc" id="FNUC190304:G1FZS-840-MONOMER"/>
<dbReference type="UniPathway" id="UPA00575"/>
<dbReference type="Proteomes" id="UP000002521">
    <property type="component" value="Chromosome"/>
</dbReference>
<dbReference type="GO" id="GO:0005829">
    <property type="term" value="C:cytosol"/>
    <property type="evidence" value="ECO:0000318"/>
    <property type="project" value="GO_Central"/>
</dbReference>
<dbReference type="GO" id="GO:0004799">
    <property type="term" value="F:thymidylate synthase activity"/>
    <property type="evidence" value="ECO:0000318"/>
    <property type="project" value="GO_Central"/>
</dbReference>
<dbReference type="GO" id="GO:0006231">
    <property type="term" value="P:dTMP biosynthetic process"/>
    <property type="evidence" value="ECO:0000318"/>
    <property type="project" value="GO_Central"/>
</dbReference>
<dbReference type="GO" id="GO:0006235">
    <property type="term" value="P:dTTP biosynthetic process"/>
    <property type="evidence" value="ECO:0007669"/>
    <property type="project" value="UniProtKB-UniRule"/>
</dbReference>
<dbReference type="GO" id="GO:0032259">
    <property type="term" value="P:methylation"/>
    <property type="evidence" value="ECO:0007669"/>
    <property type="project" value="UniProtKB-KW"/>
</dbReference>
<dbReference type="CDD" id="cd00351">
    <property type="entry name" value="TS_Pyrimidine_HMase"/>
    <property type="match status" value="1"/>
</dbReference>
<dbReference type="Gene3D" id="3.30.572.10">
    <property type="entry name" value="Thymidylate synthase/dCMP hydroxymethylase domain"/>
    <property type="match status" value="1"/>
</dbReference>
<dbReference type="HAMAP" id="MF_00008">
    <property type="entry name" value="Thymidy_synth_bact"/>
    <property type="match status" value="1"/>
</dbReference>
<dbReference type="InterPro" id="IPR045097">
    <property type="entry name" value="Thymidate_synth/dCMP_Mease"/>
</dbReference>
<dbReference type="InterPro" id="IPR023451">
    <property type="entry name" value="Thymidate_synth/dCMP_Mease_dom"/>
</dbReference>
<dbReference type="InterPro" id="IPR036926">
    <property type="entry name" value="Thymidate_synth/dCMP_Mease_sf"/>
</dbReference>
<dbReference type="InterPro" id="IPR000398">
    <property type="entry name" value="Thymidylate_synthase"/>
</dbReference>
<dbReference type="InterPro" id="IPR020940">
    <property type="entry name" value="Thymidylate_synthase_AS"/>
</dbReference>
<dbReference type="NCBIfam" id="TIGR03284">
    <property type="entry name" value="thym_sym"/>
    <property type="match status" value="1"/>
</dbReference>
<dbReference type="PANTHER" id="PTHR11548">
    <property type="entry name" value="THYMIDYLATE SYNTHASE 1"/>
    <property type="match status" value="1"/>
</dbReference>
<dbReference type="PANTHER" id="PTHR11548:SF1">
    <property type="entry name" value="THYMIDYLATE SYNTHASE 1"/>
    <property type="match status" value="1"/>
</dbReference>
<dbReference type="Pfam" id="PF00303">
    <property type="entry name" value="Thymidylat_synt"/>
    <property type="match status" value="1"/>
</dbReference>
<dbReference type="PRINTS" id="PR00108">
    <property type="entry name" value="THYMDSNTHASE"/>
</dbReference>
<dbReference type="SUPFAM" id="SSF55831">
    <property type="entry name" value="Thymidylate synthase/dCMP hydroxymethylase"/>
    <property type="match status" value="1"/>
</dbReference>
<dbReference type="PROSITE" id="PS00091">
    <property type="entry name" value="THYMIDYLATE_SYNTHASE"/>
    <property type="match status" value="1"/>
</dbReference>
<protein>
    <recommendedName>
        <fullName evidence="1">Thymidylate synthase</fullName>
        <shortName evidence="1">TS</shortName>
        <shortName evidence="1">TSase</shortName>
        <ecNumber evidence="1">2.1.1.45</ecNumber>
    </recommendedName>
</protein>
<comment type="function">
    <text evidence="1">Catalyzes the reductive methylation of 2'-deoxyuridine-5'-monophosphate (dUMP) to 2'-deoxythymidine-5'-monophosphate (dTMP) while utilizing 5,10-methylenetetrahydrofolate (mTHF) as the methyl donor and reductant in the reaction, yielding dihydrofolate (DHF) as a by-product. This enzymatic reaction provides an intracellular de novo source of dTMP, an essential precursor for DNA biosynthesis.</text>
</comment>
<comment type="catalytic activity">
    <reaction evidence="1">
        <text>dUMP + (6R)-5,10-methylene-5,6,7,8-tetrahydrofolate = 7,8-dihydrofolate + dTMP</text>
        <dbReference type="Rhea" id="RHEA:12104"/>
        <dbReference type="ChEBI" id="CHEBI:15636"/>
        <dbReference type="ChEBI" id="CHEBI:57451"/>
        <dbReference type="ChEBI" id="CHEBI:63528"/>
        <dbReference type="ChEBI" id="CHEBI:246422"/>
        <dbReference type="EC" id="2.1.1.45"/>
    </reaction>
</comment>
<comment type="pathway">
    <text evidence="1">Pyrimidine metabolism; dTTP biosynthesis.</text>
</comment>
<comment type="subunit">
    <text evidence="1">Homodimer.</text>
</comment>
<comment type="subcellular location">
    <subcellularLocation>
        <location evidence="1">Cytoplasm</location>
    </subcellularLocation>
</comment>
<comment type="similarity">
    <text evidence="1">Belongs to the thymidylate synthase family. Bacterial-type ThyA subfamily.</text>
</comment>
<name>TYSY_FUSNN</name>
<organism>
    <name type="scientific">Fusobacterium nucleatum subsp. nucleatum (strain ATCC 25586 / DSM 15643 / BCRC 10681 / CIP 101130 / JCM 8532 / KCTC 2640 / LMG 13131 / VPI 4355)</name>
    <dbReference type="NCBI Taxonomy" id="190304"/>
    <lineage>
        <taxon>Bacteria</taxon>
        <taxon>Fusobacteriati</taxon>
        <taxon>Fusobacteriota</taxon>
        <taxon>Fusobacteriia</taxon>
        <taxon>Fusobacteriales</taxon>
        <taxon>Fusobacteriaceae</taxon>
        <taxon>Fusobacterium</taxon>
    </lineage>
</organism>
<proteinExistence type="inferred from homology"/>
<sequence>MKARFDKIYKDIVDTIAEKGIWSEGNVRTKYADGTAAHYKSYIGYQFRLDNSDDEAHLITSRFAPSKAPIRELYWIWILQSNNVDVLNELGCKFWDEWKMQDGTIGKAYGYQIAQETFGQKSQLHYVINELKKNPNSRRIMTEIWIPNELSEMALTPCVHLTQWSVIGNKLYLEVRQRSCDVALGLVANVFQYSVLHKLVALECGLEPAEIIWNIHNMHIYDRHYDKLIEQVNRETFEPAKIKINNFKSIFDFKPDDIEIIDYKYGEKVSYEVAI</sequence>
<gene>
    <name evidence="1" type="primary">thyA</name>
    <name type="ordered locus">FN0240</name>
</gene>
<keyword id="KW-0963">Cytoplasm</keyword>
<keyword id="KW-0489">Methyltransferase</keyword>
<keyword id="KW-0545">Nucleotide biosynthesis</keyword>
<keyword id="KW-1185">Reference proteome</keyword>
<keyword id="KW-0808">Transferase</keyword>
<evidence type="ECO:0000255" key="1">
    <source>
        <dbReference type="HAMAP-Rule" id="MF_00008"/>
    </source>
</evidence>
<feature type="chain" id="PRO_0000140960" description="Thymidylate synthase">
    <location>
        <begin position="1"/>
        <end position="275"/>
    </location>
</feature>
<feature type="active site" description="Nucleophile" evidence="1">
    <location>
        <position position="158"/>
    </location>
</feature>
<feature type="binding site" evidence="1">
    <location>
        <begin position="138"/>
        <end position="139"/>
    </location>
    <ligand>
        <name>dUMP</name>
        <dbReference type="ChEBI" id="CHEBI:246422"/>
        <note>ligand shared between dimeric partners</note>
    </ligand>
</feature>
<feature type="binding site" description="in other chain" evidence="1">
    <location>
        <begin position="178"/>
        <end position="181"/>
    </location>
    <ligand>
        <name>dUMP</name>
        <dbReference type="ChEBI" id="CHEBI:246422"/>
        <note>ligand shared between dimeric partners</note>
    </ligand>
</feature>
<feature type="binding site" evidence="1">
    <location>
        <position position="181"/>
    </location>
    <ligand>
        <name>(6R)-5,10-methylene-5,6,7,8-tetrahydrofolate</name>
        <dbReference type="ChEBI" id="CHEBI:15636"/>
    </ligand>
</feature>
<feature type="binding site" description="in other chain" evidence="1">
    <location>
        <position position="189"/>
    </location>
    <ligand>
        <name>dUMP</name>
        <dbReference type="ChEBI" id="CHEBI:246422"/>
        <note>ligand shared between dimeric partners</note>
    </ligand>
</feature>
<feature type="binding site" description="in other chain" evidence="1">
    <location>
        <begin position="219"/>
        <end position="221"/>
    </location>
    <ligand>
        <name>dUMP</name>
        <dbReference type="ChEBI" id="CHEBI:246422"/>
        <note>ligand shared between dimeric partners</note>
    </ligand>
</feature>
<feature type="binding site" evidence="1">
    <location>
        <position position="274"/>
    </location>
    <ligand>
        <name>(6R)-5,10-methylene-5,6,7,8-tetrahydrofolate</name>
        <dbReference type="ChEBI" id="CHEBI:15636"/>
    </ligand>
</feature>
<reference key="1">
    <citation type="journal article" date="2002" name="J. Bacteriol.">
        <title>Genome sequence and analysis of the oral bacterium Fusobacterium nucleatum strain ATCC 25586.</title>
        <authorList>
            <person name="Kapatral V."/>
            <person name="Anderson I."/>
            <person name="Ivanova N."/>
            <person name="Reznik G."/>
            <person name="Los T."/>
            <person name="Lykidis A."/>
            <person name="Bhattacharyya A."/>
            <person name="Bartman A."/>
            <person name="Gardner W."/>
            <person name="Grechkin G."/>
            <person name="Zhu L."/>
            <person name="Vasieva O."/>
            <person name="Chu L."/>
            <person name="Kogan Y."/>
            <person name="Chaga O."/>
            <person name="Goltsman E."/>
            <person name="Bernal A."/>
            <person name="Larsen N."/>
            <person name="D'Souza M."/>
            <person name="Walunas T."/>
            <person name="Pusch G."/>
            <person name="Haselkorn R."/>
            <person name="Fonstein M."/>
            <person name="Kyrpides N.C."/>
            <person name="Overbeek R."/>
        </authorList>
    </citation>
    <scope>NUCLEOTIDE SEQUENCE [LARGE SCALE GENOMIC DNA]</scope>
    <source>
        <strain>ATCC 25586 / DSM 15643 / BCRC 10681 / CIP 101130 / JCM 8532 / KCTC 2640 / LMG 13131 / VPI 4355</strain>
    </source>
</reference>
<accession>Q8RGP6</accession>